<name>AROC_CHIPD</name>
<dbReference type="EC" id="4.2.3.5" evidence="1"/>
<dbReference type="EMBL" id="CP001699">
    <property type="protein sequence ID" value="ACU59439.1"/>
    <property type="molecule type" value="Genomic_DNA"/>
</dbReference>
<dbReference type="RefSeq" id="WP_012789615.1">
    <property type="nucleotide sequence ID" value="NC_013132.1"/>
</dbReference>
<dbReference type="SMR" id="C7PC56"/>
<dbReference type="STRING" id="485918.Cpin_1943"/>
<dbReference type="KEGG" id="cpi:Cpin_1943"/>
<dbReference type="eggNOG" id="COG0082">
    <property type="taxonomic scope" value="Bacteria"/>
</dbReference>
<dbReference type="HOGENOM" id="CLU_034547_0_0_10"/>
<dbReference type="OrthoDB" id="9771806at2"/>
<dbReference type="UniPathway" id="UPA00053">
    <property type="reaction ID" value="UER00090"/>
</dbReference>
<dbReference type="Proteomes" id="UP000002215">
    <property type="component" value="Chromosome"/>
</dbReference>
<dbReference type="GO" id="GO:0005829">
    <property type="term" value="C:cytosol"/>
    <property type="evidence" value="ECO:0007669"/>
    <property type="project" value="TreeGrafter"/>
</dbReference>
<dbReference type="GO" id="GO:0004107">
    <property type="term" value="F:chorismate synthase activity"/>
    <property type="evidence" value="ECO:0007669"/>
    <property type="project" value="UniProtKB-UniRule"/>
</dbReference>
<dbReference type="GO" id="GO:0010181">
    <property type="term" value="F:FMN binding"/>
    <property type="evidence" value="ECO:0007669"/>
    <property type="project" value="TreeGrafter"/>
</dbReference>
<dbReference type="GO" id="GO:0008652">
    <property type="term" value="P:amino acid biosynthetic process"/>
    <property type="evidence" value="ECO:0007669"/>
    <property type="project" value="UniProtKB-KW"/>
</dbReference>
<dbReference type="GO" id="GO:0009073">
    <property type="term" value="P:aromatic amino acid family biosynthetic process"/>
    <property type="evidence" value="ECO:0007669"/>
    <property type="project" value="UniProtKB-KW"/>
</dbReference>
<dbReference type="GO" id="GO:0009423">
    <property type="term" value="P:chorismate biosynthetic process"/>
    <property type="evidence" value="ECO:0007669"/>
    <property type="project" value="UniProtKB-UniRule"/>
</dbReference>
<dbReference type="CDD" id="cd07304">
    <property type="entry name" value="Chorismate_synthase"/>
    <property type="match status" value="1"/>
</dbReference>
<dbReference type="Gene3D" id="3.60.150.10">
    <property type="entry name" value="Chorismate synthase AroC"/>
    <property type="match status" value="2"/>
</dbReference>
<dbReference type="HAMAP" id="MF_00300">
    <property type="entry name" value="Chorismate_synth"/>
    <property type="match status" value="1"/>
</dbReference>
<dbReference type="InterPro" id="IPR000453">
    <property type="entry name" value="Chorismate_synth"/>
</dbReference>
<dbReference type="InterPro" id="IPR035904">
    <property type="entry name" value="Chorismate_synth_AroC_sf"/>
</dbReference>
<dbReference type="InterPro" id="IPR020541">
    <property type="entry name" value="Chorismate_synthase_CS"/>
</dbReference>
<dbReference type="PANTHER" id="PTHR21085">
    <property type="entry name" value="CHORISMATE SYNTHASE"/>
    <property type="match status" value="1"/>
</dbReference>
<dbReference type="PANTHER" id="PTHR21085:SF0">
    <property type="entry name" value="CHORISMATE SYNTHASE"/>
    <property type="match status" value="1"/>
</dbReference>
<dbReference type="Pfam" id="PF01264">
    <property type="entry name" value="Chorismate_synt"/>
    <property type="match status" value="1"/>
</dbReference>
<dbReference type="PIRSF" id="PIRSF001456">
    <property type="entry name" value="Chorismate_synth"/>
    <property type="match status" value="1"/>
</dbReference>
<dbReference type="SUPFAM" id="SSF103263">
    <property type="entry name" value="Chorismate synthase, AroC"/>
    <property type="match status" value="1"/>
</dbReference>
<dbReference type="PROSITE" id="PS00788">
    <property type="entry name" value="CHORISMATE_SYNTHASE_2"/>
    <property type="match status" value="1"/>
</dbReference>
<accession>C7PC56</accession>
<evidence type="ECO:0000255" key="1">
    <source>
        <dbReference type="HAMAP-Rule" id="MF_00300"/>
    </source>
</evidence>
<feature type="chain" id="PRO_0000405967" description="Chorismate synthase">
    <location>
        <begin position="1"/>
        <end position="332"/>
    </location>
</feature>
<feature type="binding site" evidence="1">
    <location>
        <position position="46"/>
    </location>
    <ligand>
        <name>NADP(+)</name>
        <dbReference type="ChEBI" id="CHEBI:58349"/>
    </ligand>
</feature>
<feature type="binding site" evidence="1">
    <location>
        <begin position="123"/>
        <end position="125"/>
    </location>
    <ligand>
        <name>FMN</name>
        <dbReference type="ChEBI" id="CHEBI:58210"/>
    </ligand>
</feature>
<feature type="binding site" evidence="1">
    <location>
        <position position="253"/>
    </location>
    <ligand>
        <name>FMN</name>
        <dbReference type="ChEBI" id="CHEBI:58210"/>
    </ligand>
</feature>
<feature type="binding site" evidence="1">
    <location>
        <begin position="268"/>
        <end position="272"/>
    </location>
    <ligand>
        <name>FMN</name>
        <dbReference type="ChEBI" id="CHEBI:58210"/>
    </ligand>
</feature>
<feature type="binding site" evidence="1">
    <location>
        <position position="295"/>
    </location>
    <ligand>
        <name>FMN</name>
        <dbReference type="ChEBI" id="CHEBI:58210"/>
    </ligand>
</feature>
<sequence length="332" mass="35153">MNSFGRLFRVNVFGESHGASVGVNIDGIPAGIPLTQEDFLPDLERRKAGAKGTTPRKEEDLPFIKSGVFNDHTTGAPITILFENNNTRSTDYEKLREFPRPGHADFVATHKYGGFEDYRGGGHFSGRLTLNLVAAGVIAKKILGPGISVKATLKEVAGLPDAEQGLEAAIAAKDSVGGIVECVVEGLPIGLGEPFFDSVESTIAHAVFSIPAIKGIEFGAGFAAARMKGVEHNDAILDASGKTATNHAGGVVGGITNGNPLVFRVAVKPTSSTPKEQHTLNIKSGEVENFSVKGRHDLCIALRVPVVLEAVAAMALADFMLLEQRSNRVFKN</sequence>
<keyword id="KW-0028">Amino-acid biosynthesis</keyword>
<keyword id="KW-0057">Aromatic amino acid biosynthesis</keyword>
<keyword id="KW-0274">FAD</keyword>
<keyword id="KW-0285">Flavoprotein</keyword>
<keyword id="KW-0288">FMN</keyword>
<keyword id="KW-0456">Lyase</keyword>
<keyword id="KW-0521">NADP</keyword>
<gene>
    <name evidence="1" type="primary">aroC</name>
    <name type="ordered locus">Cpin_1943</name>
</gene>
<organism>
    <name type="scientific">Chitinophaga pinensis (strain ATCC 43595 / DSM 2588 / LMG 13176 / NBRC 15968 / NCIMB 11800 / UQM 2034)</name>
    <dbReference type="NCBI Taxonomy" id="485918"/>
    <lineage>
        <taxon>Bacteria</taxon>
        <taxon>Pseudomonadati</taxon>
        <taxon>Bacteroidota</taxon>
        <taxon>Chitinophagia</taxon>
        <taxon>Chitinophagales</taxon>
        <taxon>Chitinophagaceae</taxon>
        <taxon>Chitinophaga</taxon>
    </lineage>
</organism>
<proteinExistence type="inferred from homology"/>
<comment type="function">
    <text evidence="1">Catalyzes the anti-1,4-elimination of the C-3 phosphate and the C-6 proR hydrogen from 5-enolpyruvylshikimate-3-phosphate (EPSP) to yield chorismate, which is the branch point compound that serves as the starting substrate for the three terminal pathways of aromatic amino acid biosynthesis. This reaction introduces a second double bond into the aromatic ring system.</text>
</comment>
<comment type="catalytic activity">
    <reaction evidence="1">
        <text>5-O-(1-carboxyvinyl)-3-phosphoshikimate = chorismate + phosphate</text>
        <dbReference type="Rhea" id="RHEA:21020"/>
        <dbReference type="ChEBI" id="CHEBI:29748"/>
        <dbReference type="ChEBI" id="CHEBI:43474"/>
        <dbReference type="ChEBI" id="CHEBI:57701"/>
        <dbReference type="EC" id="4.2.3.5"/>
    </reaction>
</comment>
<comment type="cofactor">
    <cofactor evidence="1">
        <name>FMNH2</name>
        <dbReference type="ChEBI" id="CHEBI:57618"/>
    </cofactor>
    <text evidence="1">Reduced FMN (FMNH(2)).</text>
</comment>
<comment type="pathway">
    <text evidence="1">Metabolic intermediate biosynthesis; chorismate biosynthesis; chorismate from D-erythrose 4-phosphate and phosphoenolpyruvate: step 7/7.</text>
</comment>
<comment type="subunit">
    <text evidence="1">Homotetramer.</text>
</comment>
<comment type="similarity">
    <text evidence="1">Belongs to the chorismate synthase family.</text>
</comment>
<protein>
    <recommendedName>
        <fullName evidence="1">Chorismate synthase</fullName>
        <shortName evidence="1">CS</shortName>
        <ecNumber evidence="1">4.2.3.5</ecNumber>
    </recommendedName>
    <alternativeName>
        <fullName evidence="1">5-enolpyruvylshikimate-3-phosphate phospholyase</fullName>
    </alternativeName>
</protein>
<reference key="1">
    <citation type="submission" date="2009-08" db="EMBL/GenBank/DDBJ databases">
        <title>The complete genome of Chitinophaga pinensis DSM 2588.</title>
        <authorList>
            <consortium name="US DOE Joint Genome Institute (JGI-PGF)"/>
            <person name="Lucas S."/>
            <person name="Copeland A."/>
            <person name="Lapidus A."/>
            <person name="Glavina del Rio T."/>
            <person name="Dalin E."/>
            <person name="Tice H."/>
            <person name="Bruce D."/>
            <person name="Goodwin L."/>
            <person name="Pitluck S."/>
            <person name="Kyrpides N."/>
            <person name="Mavromatis K."/>
            <person name="Ivanova N."/>
            <person name="Mikhailova N."/>
            <person name="Sims D."/>
            <person name="Meinche L."/>
            <person name="Brettin T."/>
            <person name="Detter J.C."/>
            <person name="Han C."/>
            <person name="Larimer F."/>
            <person name="Land M."/>
            <person name="Hauser L."/>
            <person name="Markowitz V."/>
            <person name="Cheng J.-F."/>
            <person name="Hugenholtz P."/>
            <person name="Woyke T."/>
            <person name="Wu D."/>
            <person name="Spring S."/>
            <person name="Klenk H.-P."/>
            <person name="Eisen J.A."/>
        </authorList>
    </citation>
    <scope>NUCLEOTIDE SEQUENCE [LARGE SCALE GENOMIC DNA]</scope>
    <source>
        <strain>ATCC 43595 / DSM 2588 / LMG 13176 / NBRC 15968 / NCIMB 11800 / UQM 2034</strain>
    </source>
</reference>